<sequence length="390" mass="41816">MNTAVNANVVHESEAQRQHARIKIPAKLRLLNDKPNAPLVRIEDLSAGGLSFVAPAGLAYTTGEVIKGRLQFLIDNLGLAMDVEMQVRSVDTASGRVGCQFQNLEAQDIATLRHLITSHLSGEIVSLGEVLATLQRDNFTKARKVKGSDSGMSALGRLRAVTFSLGIFIVGLAAFGFIFKTVYGLYFVSHASAGLVSIPSMDVTMPREGTLQSLVAQNGEATKGAPLATFNTSMLEMLKGSLTGEDLQPAKIEELYGKQMSGTMTSPCDCVVARQLVADGQFASKGQVIFQLVPRNAPATVEARFTYRQFNDVKPGTRVSFQIAGEDKLRTGQIVSSTNLSDTDLSTDIRVQIKPDESLSSSLAGRPVEVVSDRGPSVNWLLDKAMAAGL</sequence>
<dbReference type="EMBL" id="AE016853">
    <property type="protein sequence ID" value="AAO54766.1"/>
    <property type="molecule type" value="Genomic_DNA"/>
</dbReference>
<dbReference type="RefSeq" id="NP_791071.1">
    <property type="nucleotide sequence ID" value="NC_004578.1"/>
</dbReference>
<dbReference type="RefSeq" id="WP_005764144.1">
    <property type="nucleotide sequence ID" value="NC_004578.1"/>
</dbReference>
<dbReference type="SMR" id="Q887Q0"/>
<dbReference type="STRING" id="223283.PSPTO_1241"/>
<dbReference type="DNASU" id="1182877"/>
<dbReference type="GeneID" id="1182877"/>
<dbReference type="KEGG" id="pst:PSPTO_1241"/>
<dbReference type="PATRIC" id="fig|223283.9.peg.1262"/>
<dbReference type="eggNOG" id="COG0845">
    <property type="taxonomic scope" value="Bacteria"/>
</dbReference>
<dbReference type="HOGENOM" id="CLU_058768_0_0_6"/>
<dbReference type="OrthoDB" id="5912905at2"/>
<dbReference type="PhylomeDB" id="Q887Q0"/>
<dbReference type="UniPathway" id="UPA00286"/>
<dbReference type="Proteomes" id="UP000002515">
    <property type="component" value="Chromosome"/>
</dbReference>
<dbReference type="GO" id="GO:0042597">
    <property type="term" value="C:periplasmic space"/>
    <property type="evidence" value="ECO:0007669"/>
    <property type="project" value="UniProtKB-SubCell"/>
</dbReference>
<dbReference type="GO" id="GO:0035438">
    <property type="term" value="F:cyclic-di-GMP binding"/>
    <property type="evidence" value="ECO:0007669"/>
    <property type="project" value="InterPro"/>
</dbReference>
<dbReference type="GO" id="GO:0042121">
    <property type="term" value="P:alginic acid biosynthetic process"/>
    <property type="evidence" value="ECO:0007669"/>
    <property type="project" value="UniProtKB-UniPathway"/>
</dbReference>
<dbReference type="Gene3D" id="2.40.10.220">
    <property type="entry name" value="predicted glycosyltransferase like domains"/>
    <property type="match status" value="1"/>
</dbReference>
<dbReference type="InterPro" id="IPR050739">
    <property type="entry name" value="MFP"/>
</dbReference>
<dbReference type="InterPro" id="IPR009875">
    <property type="entry name" value="PilZ_domain"/>
</dbReference>
<dbReference type="PANTHER" id="PTHR30386">
    <property type="entry name" value="MEMBRANE FUSION SUBUNIT OF EMRAB-TOLC MULTIDRUG EFFLUX PUMP"/>
    <property type="match status" value="1"/>
</dbReference>
<dbReference type="PANTHER" id="PTHR30386:SF19">
    <property type="entry name" value="MULTIDRUG EXPORT PROTEIN EMRA-RELATED"/>
    <property type="match status" value="1"/>
</dbReference>
<dbReference type="Pfam" id="PF13437">
    <property type="entry name" value="HlyD_3"/>
    <property type="match status" value="1"/>
</dbReference>
<dbReference type="Pfam" id="PF07238">
    <property type="entry name" value="PilZ"/>
    <property type="match status" value="1"/>
</dbReference>
<dbReference type="SUPFAM" id="SSF141371">
    <property type="entry name" value="PilZ domain-like"/>
    <property type="match status" value="1"/>
</dbReference>
<gene>
    <name type="primary">alg44</name>
    <name type="ordered locus">PSPTO_1241</name>
</gene>
<evidence type="ECO:0000250" key="1"/>
<evidence type="ECO:0000305" key="2"/>
<name>ALG44_PSESM</name>
<organism>
    <name type="scientific">Pseudomonas syringae pv. tomato (strain ATCC BAA-871 / DC3000)</name>
    <dbReference type="NCBI Taxonomy" id="223283"/>
    <lineage>
        <taxon>Bacteria</taxon>
        <taxon>Pseudomonadati</taxon>
        <taxon>Pseudomonadota</taxon>
        <taxon>Gammaproteobacteria</taxon>
        <taxon>Pseudomonadales</taxon>
        <taxon>Pseudomonadaceae</taxon>
        <taxon>Pseudomonas</taxon>
    </lineage>
</organism>
<keyword id="KW-0016">Alginate biosynthesis</keyword>
<keyword id="KW-0574">Periplasm</keyword>
<keyword id="KW-1185">Reference proteome</keyword>
<proteinExistence type="inferred from homology"/>
<comment type="function">
    <text evidence="1">Required for alginate biosynthesis.</text>
</comment>
<comment type="pathway">
    <text>Glycan biosynthesis; alginate biosynthesis.</text>
</comment>
<comment type="subcellular location">
    <subcellularLocation>
        <location evidence="1">Periplasm</location>
    </subcellularLocation>
</comment>
<comment type="similarity">
    <text evidence="2">Belongs to the Alg44 family.</text>
</comment>
<reference key="1">
    <citation type="journal article" date="2003" name="Proc. Natl. Acad. Sci. U.S.A.">
        <title>The complete genome sequence of the Arabidopsis and tomato pathogen Pseudomonas syringae pv. tomato DC3000.</title>
        <authorList>
            <person name="Buell C.R."/>
            <person name="Joardar V."/>
            <person name="Lindeberg M."/>
            <person name="Selengut J."/>
            <person name="Paulsen I.T."/>
            <person name="Gwinn M.L."/>
            <person name="Dodson R.J."/>
            <person name="DeBoy R.T."/>
            <person name="Durkin A.S."/>
            <person name="Kolonay J.F."/>
            <person name="Madupu R."/>
            <person name="Daugherty S.C."/>
            <person name="Brinkac L.M."/>
            <person name="Beanan M.J."/>
            <person name="Haft D.H."/>
            <person name="Nelson W.C."/>
            <person name="Davidsen T.M."/>
            <person name="Zafar N."/>
            <person name="Zhou L."/>
            <person name="Liu J."/>
            <person name="Yuan Q."/>
            <person name="Khouri H.M."/>
            <person name="Fedorova N.B."/>
            <person name="Tran B."/>
            <person name="Russell D."/>
            <person name="Berry K.J."/>
            <person name="Utterback T.R."/>
            <person name="Van Aken S.E."/>
            <person name="Feldblyum T.V."/>
            <person name="D'Ascenzo M."/>
            <person name="Deng W.-L."/>
            <person name="Ramos A.R."/>
            <person name="Alfano J.R."/>
            <person name="Cartinhour S."/>
            <person name="Chatterjee A.K."/>
            <person name="Delaney T.P."/>
            <person name="Lazarowitz S.G."/>
            <person name="Martin G.B."/>
            <person name="Schneider D.J."/>
            <person name="Tang X."/>
            <person name="Bender C.L."/>
            <person name="White O."/>
            <person name="Fraser C.M."/>
            <person name="Collmer A."/>
        </authorList>
    </citation>
    <scope>NUCLEOTIDE SEQUENCE [LARGE SCALE GENOMIC DNA]</scope>
    <source>
        <strain>ATCC BAA-871 / DC3000</strain>
    </source>
</reference>
<feature type="chain" id="PRO_0000064554" description="Alginate biosynthesis protein Alg44">
    <location>
        <begin position="1"/>
        <end position="390"/>
    </location>
</feature>
<feature type="domain" description="PilZ">
    <location>
        <begin position="16"/>
        <end position="117"/>
    </location>
</feature>
<accession>Q887Q0</accession>
<protein>
    <recommendedName>
        <fullName>Alginate biosynthesis protein Alg44</fullName>
    </recommendedName>
</protein>